<keyword id="KW-0238">DNA-binding</keyword>
<keyword id="KW-0371">Homeobox</keyword>
<keyword id="KW-0539">Nucleus</keyword>
<keyword id="KW-1185">Reference proteome</keyword>
<keyword id="KW-0677">Repeat</keyword>
<keyword id="KW-0804">Transcription</keyword>
<keyword id="KW-0805">Transcription regulation</keyword>
<dbReference type="EMBL" id="AC126281">
    <property type="status" value="NOT_ANNOTATED_CDS"/>
    <property type="molecule type" value="Genomic_DNA"/>
</dbReference>
<dbReference type="SMR" id="P0CJ88"/>
<dbReference type="FunCoup" id="P0CJ88">
    <property type="interactions" value="16"/>
</dbReference>
<dbReference type="IntAct" id="P0CJ88">
    <property type="interactions" value="1"/>
</dbReference>
<dbReference type="GlyGen" id="P0CJ88">
    <property type="glycosylation" value="1 site"/>
</dbReference>
<dbReference type="iPTMnet" id="P0CJ88"/>
<dbReference type="PhosphoSitePlus" id="P0CJ88"/>
<dbReference type="BioMuta" id="HGNC:38689"/>
<dbReference type="MassIVE" id="P0CJ88"/>
<dbReference type="AGR" id="HGNC:38689"/>
<dbReference type="GeneCards" id="DUX4L5"/>
<dbReference type="HGNC" id="HGNC:38689">
    <property type="gene designation" value="DUX4L5"/>
</dbReference>
<dbReference type="neXtProt" id="NX_P0CJ88"/>
<dbReference type="InParanoid" id="P0CJ88"/>
<dbReference type="PAN-GO" id="P0CJ88">
    <property type="GO annotations" value="4 GO annotations based on evolutionary models"/>
</dbReference>
<dbReference type="PhylomeDB" id="P0CJ88"/>
<dbReference type="Pharos" id="P0CJ88">
    <property type="development level" value="Tdark"/>
</dbReference>
<dbReference type="PRO" id="PR:P0CJ88"/>
<dbReference type="Proteomes" id="UP000005640">
    <property type="component" value="Unplaced"/>
</dbReference>
<dbReference type="RNAct" id="P0CJ88">
    <property type="molecule type" value="protein"/>
</dbReference>
<dbReference type="GO" id="GO:0000785">
    <property type="term" value="C:chromatin"/>
    <property type="evidence" value="ECO:0000247"/>
    <property type="project" value="NTNU_SB"/>
</dbReference>
<dbReference type="GO" id="GO:0005634">
    <property type="term" value="C:nucleus"/>
    <property type="evidence" value="ECO:0000318"/>
    <property type="project" value="GO_Central"/>
</dbReference>
<dbReference type="GO" id="GO:0000981">
    <property type="term" value="F:DNA-binding transcription factor activity, RNA polymerase II-specific"/>
    <property type="evidence" value="ECO:0000247"/>
    <property type="project" value="NTNU_SB"/>
</dbReference>
<dbReference type="GO" id="GO:0000977">
    <property type="term" value="F:RNA polymerase II transcription regulatory region sequence-specific DNA binding"/>
    <property type="evidence" value="ECO:0000318"/>
    <property type="project" value="GO_Central"/>
</dbReference>
<dbReference type="GO" id="GO:0006357">
    <property type="term" value="P:regulation of transcription by RNA polymerase II"/>
    <property type="evidence" value="ECO:0000318"/>
    <property type="project" value="GO_Central"/>
</dbReference>
<dbReference type="CDD" id="cd00086">
    <property type="entry name" value="homeodomain"/>
    <property type="match status" value="2"/>
</dbReference>
<dbReference type="FunFam" id="1.10.10.60:FF:000325">
    <property type="entry name" value="Double homeobox protein 4"/>
    <property type="match status" value="1"/>
</dbReference>
<dbReference type="FunFam" id="1.10.10.60:FF:000354">
    <property type="entry name" value="Double homeobox protein 4"/>
    <property type="match status" value="1"/>
</dbReference>
<dbReference type="Gene3D" id="1.10.10.60">
    <property type="entry name" value="Homeodomain-like"/>
    <property type="match status" value="2"/>
</dbReference>
<dbReference type="InterPro" id="IPR001356">
    <property type="entry name" value="HD"/>
</dbReference>
<dbReference type="InterPro" id="IPR051306">
    <property type="entry name" value="Homeobox_regulator"/>
</dbReference>
<dbReference type="InterPro" id="IPR009057">
    <property type="entry name" value="Homeodomain-like_sf"/>
</dbReference>
<dbReference type="InterPro" id="IPR000047">
    <property type="entry name" value="HTH_motif"/>
</dbReference>
<dbReference type="PANTHER" id="PTHR46123:SF3">
    <property type="entry name" value="DOUBLE HOMEOBOX PROTEIN 1-RELATED"/>
    <property type="match status" value="1"/>
</dbReference>
<dbReference type="PANTHER" id="PTHR46123">
    <property type="entry name" value="MIX-TYPE HOMEOBOX GENE 1-RELATED"/>
    <property type="match status" value="1"/>
</dbReference>
<dbReference type="Pfam" id="PF00046">
    <property type="entry name" value="Homeodomain"/>
    <property type="match status" value="2"/>
</dbReference>
<dbReference type="PRINTS" id="PR00031">
    <property type="entry name" value="HTHREPRESSR"/>
</dbReference>
<dbReference type="SMART" id="SM00389">
    <property type="entry name" value="HOX"/>
    <property type="match status" value="2"/>
</dbReference>
<dbReference type="SUPFAM" id="SSF46689">
    <property type="entry name" value="Homeodomain-like"/>
    <property type="match status" value="2"/>
</dbReference>
<dbReference type="PROSITE" id="PS50071">
    <property type="entry name" value="HOMEOBOX_2"/>
    <property type="match status" value="2"/>
</dbReference>
<protein>
    <recommendedName>
        <fullName>Double homeobox protein 4-like protein 5</fullName>
    </recommendedName>
</protein>
<reference key="1">
    <citation type="journal article" date="2005" name="Nature">
        <title>Generation and annotation of the DNA sequences of human chromosomes 2 and 4.</title>
        <authorList>
            <person name="Hillier L.W."/>
            <person name="Graves T.A."/>
            <person name="Fulton R.S."/>
            <person name="Fulton L.A."/>
            <person name="Pepin K.H."/>
            <person name="Minx P."/>
            <person name="Wagner-McPherson C."/>
            <person name="Layman D."/>
            <person name="Wylie K."/>
            <person name="Sekhon M."/>
            <person name="Becker M.C."/>
            <person name="Fewell G.A."/>
            <person name="Delehaunty K.D."/>
            <person name="Miner T.L."/>
            <person name="Nash W.E."/>
            <person name="Kremitzki C."/>
            <person name="Oddy L."/>
            <person name="Du H."/>
            <person name="Sun H."/>
            <person name="Bradshaw-Cordum H."/>
            <person name="Ali J."/>
            <person name="Carter J."/>
            <person name="Cordes M."/>
            <person name="Harris A."/>
            <person name="Isak A."/>
            <person name="van Brunt A."/>
            <person name="Nguyen C."/>
            <person name="Du F."/>
            <person name="Courtney L."/>
            <person name="Kalicki J."/>
            <person name="Ozersky P."/>
            <person name="Abbott S."/>
            <person name="Armstrong J."/>
            <person name="Belter E.A."/>
            <person name="Caruso L."/>
            <person name="Cedroni M."/>
            <person name="Cotton M."/>
            <person name="Davidson T."/>
            <person name="Desai A."/>
            <person name="Elliott G."/>
            <person name="Erb T."/>
            <person name="Fronick C."/>
            <person name="Gaige T."/>
            <person name="Haakenson W."/>
            <person name="Haglund K."/>
            <person name="Holmes A."/>
            <person name="Harkins R."/>
            <person name="Kim K."/>
            <person name="Kruchowski S.S."/>
            <person name="Strong C.M."/>
            <person name="Grewal N."/>
            <person name="Goyea E."/>
            <person name="Hou S."/>
            <person name="Levy A."/>
            <person name="Martinka S."/>
            <person name="Mead K."/>
            <person name="McLellan M.D."/>
            <person name="Meyer R."/>
            <person name="Randall-Maher J."/>
            <person name="Tomlinson C."/>
            <person name="Dauphin-Kohlberg S."/>
            <person name="Kozlowicz-Reilly A."/>
            <person name="Shah N."/>
            <person name="Swearengen-Shahid S."/>
            <person name="Snider J."/>
            <person name="Strong J.T."/>
            <person name="Thompson J."/>
            <person name="Yoakum M."/>
            <person name="Leonard S."/>
            <person name="Pearman C."/>
            <person name="Trani L."/>
            <person name="Radionenko M."/>
            <person name="Waligorski J.E."/>
            <person name="Wang C."/>
            <person name="Rock S.M."/>
            <person name="Tin-Wollam A.-M."/>
            <person name="Maupin R."/>
            <person name="Latreille P."/>
            <person name="Wendl M.C."/>
            <person name="Yang S.-P."/>
            <person name="Pohl C."/>
            <person name="Wallis J.W."/>
            <person name="Spieth J."/>
            <person name="Bieri T.A."/>
            <person name="Berkowicz N."/>
            <person name="Nelson J.O."/>
            <person name="Osborne J."/>
            <person name="Ding L."/>
            <person name="Meyer R."/>
            <person name="Sabo A."/>
            <person name="Shotland Y."/>
            <person name="Sinha P."/>
            <person name="Wohldmann P.E."/>
            <person name="Cook L.L."/>
            <person name="Hickenbotham M.T."/>
            <person name="Eldred J."/>
            <person name="Williams D."/>
            <person name="Jones T.A."/>
            <person name="She X."/>
            <person name="Ciccarelli F.D."/>
            <person name="Izaurralde E."/>
            <person name="Taylor J."/>
            <person name="Schmutz J."/>
            <person name="Myers R.M."/>
            <person name="Cox D.R."/>
            <person name="Huang X."/>
            <person name="McPherson J.D."/>
            <person name="Mardis E.R."/>
            <person name="Clifton S.W."/>
            <person name="Warren W.C."/>
            <person name="Chinwalla A.T."/>
            <person name="Eddy S.R."/>
            <person name="Marra M.A."/>
            <person name="Ovcharenko I."/>
            <person name="Furey T.S."/>
            <person name="Miller W."/>
            <person name="Eichler E.E."/>
            <person name="Bork P."/>
            <person name="Suyama M."/>
            <person name="Torrents D."/>
            <person name="Waterston R.H."/>
            <person name="Wilson R.K."/>
        </authorList>
    </citation>
    <scope>NUCLEOTIDE SEQUENCE [LARGE SCALE GENOMIC DNA]</scope>
</reference>
<accession>P0CJ88</accession>
<name>DU4L5_HUMAN</name>
<evidence type="ECO:0000250" key="1"/>
<evidence type="ECO:0000255" key="2">
    <source>
        <dbReference type="PROSITE-ProRule" id="PRU00108"/>
    </source>
</evidence>
<evidence type="ECO:0000256" key="3">
    <source>
        <dbReference type="SAM" id="MobiDB-lite"/>
    </source>
</evidence>
<organism>
    <name type="scientific">Homo sapiens</name>
    <name type="common">Human</name>
    <dbReference type="NCBI Taxonomy" id="9606"/>
    <lineage>
        <taxon>Eukaryota</taxon>
        <taxon>Metazoa</taxon>
        <taxon>Chordata</taxon>
        <taxon>Craniata</taxon>
        <taxon>Vertebrata</taxon>
        <taxon>Euteleostomi</taxon>
        <taxon>Mammalia</taxon>
        <taxon>Eutheria</taxon>
        <taxon>Euarchontoglires</taxon>
        <taxon>Primates</taxon>
        <taxon>Haplorrhini</taxon>
        <taxon>Catarrhini</taxon>
        <taxon>Hominidae</taxon>
        <taxon>Homo</taxon>
    </lineage>
</organism>
<comment type="function">
    <text evidence="1">May be involved in transcriptional regulation.</text>
</comment>
<comment type="subcellular location">
    <subcellularLocation>
        <location evidence="2">Nucleus</location>
    </subcellularLocation>
</comment>
<feature type="chain" id="PRO_0000405253" description="Double homeobox protein 4-like protein 5">
    <location>
        <begin position="1"/>
        <end position="424"/>
    </location>
</feature>
<feature type="DNA-binding region" description="Homeobox 1" evidence="2">
    <location>
        <begin position="19"/>
        <end position="78"/>
    </location>
</feature>
<feature type="DNA-binding region" description="Homeobox 2" evidence="2">
    <location>
        <begin position="94"/>
        <end position="153"/>
    </location>
</feature>
<feature type="region of interest" description="Disordered" evidence="3">
    <location>
        <begin position="1"/>
        <end position="24"/>
    </location>
</feature>
<feature type="region of interest" description="Disordered" evidence="3">
    <location>
        <begin position="72"/>
        <end position="102"/>
    </location>
</feature>
<feature type="region of interest" description="Disordered" evidence="3">
    <location>
        <begin position="148"/>
        <end position="167"/>
    </location>
</feature>
<feature type="region of interest" description="Disordered" evidence="3">
    <location>
        <begin position="218"/>
        <end position="362"/>
    </location>
</feature>
<feature type="region of interest" description="Disordered" evidence="3">
    <location>
        <begin position="388"/>
        <end position="414"/>
    </location>
</feature>
<feature type="compositionally biased region" description="Polar residues" evidence="3">
    <location>
        <begin position="1"/>
        <end position="10"/>
    </location>
</feature>
<feature type="compositionally biased region" description="Basic and acidic residues" evidence="3">
    <location>
        <begin position="265"/>
        <end position="274"/>
    </location>
</feature>
<feature type="compositionally biased region" description="Low complexity" evidence="3">
    <location>
        <begin position="278"/>
        <end position="302"/>
    </location>
</feature>
<feature type="compositionally biased region" description="Low complexity" evidence="3">
    <location>
        <begin position="319"/>
        <end position="329"/>
    </location>
</feature>
<proteinExistence type="inferred from homology"/>
<sequence length="424" mass="44926">MALPTPSDSTLPAEARGRGRRRRLVWTPSQSEALRACFERNPYPGIATRERLAQAIGIPEPRVQIWFQNERSRQLRQHRRESRPWPGRRGPPEGRRKRTAVTGSQTALLLRAFEKDRFPGIAAREELARETGLPESRIQIWFQNRRARHPGQGGRAPAQAGGLCSAAPGGGHPAPSWVAFAHTGAWGTGLPAPHVPCAPGALPQGAFVSQAARAAPALQPSQAAPAEGVSQPAPARGDFAYAAPAPPDGALSHPQAPRWPPHPGKSREDRDPQRDGLPGPCAVAQPGPAQAGPQGQGVLAPPTSQGSPWWGWGRGPQVAGAAWEPQAGAAPPPQPAPPDASASARQGQMQGIPAPSQALQEPAPWSALPCGLLLDELLASPEFLQQAQPLLETEAPGELEASEEAASLEAPLSEEEYRALLEEL</sequence>
<gene>
    <name type="primary">DUX4L5</name>
</gene>